<keyword id="KW-0328">Glycosyltransferase</keyword>
<keyword id="KW-0441">Lipid A biosynthesis</keyword>
<keyword id="KW-0444">Lipid biosynthesis</keyword>
<keyword id="KW-0443">Lipid metabolism</keyword>
<keyword id="KW-1185">Reference proteome</keyword>
<keyword id="KW-0808">Transferase</keyword>
<evidence type="ECO:0000250" key="1"/>
<evidence type="ECO:0000305" key="2"/>
<protein>
    <recommendedName>
        <fullName>Lipid-A-disaccharide synthase</fullName>
        <ecNumber>2.4.1.182</ecNumber>
    </recommendedName>
</protein>
<sequence>MPTILVSALEASSNAHLEELRQNLPEDYRFIGVFEGKEVLYSPREFSIMGFRDVIGRLGFLLKAHKEMVQLAKQADMVLLMDSSSFNIPLAKKIKKQDPHKKIMYYILPQVWAWKKWRAKSLEKYCDFLGAILPFEVGYYQKKAQYVGHPLLDEIKHYKKDIKGETLVFMPGSRKSEIAKMFPLFVKAAQMLEQNEGFKRRVLVVPSFFKGLDLKALYGEDIQLFEISYDAHKSLFEAEFAFICSGTATLEAALIGTPFVLAYRAKTMDFLIARMLVNLHYIGLANIFYNALNNETPGLGESQLHPELIQHFLSVEGLLKAYKEMDRERYFKESLRLREYLKHGSARKIANEMAFLLNLT</sequence>
<reference key="1">
    <citation type="journal article" date="1997" name="Nature">
        <title>The complete genome sequence of the gastric pathogen Helicobacter pylori.</title>
        <authorList>
            <person name="Tomb J.-F."/>
            <person name="White O."/>
            <person name="Kerlavage A.R."/>
            <person name="Clayton R.A."/>
            <person name="Sutton G.G."/>
            <person name="Fleischmann R.D."/>
            <person name="Ketchum K.A."/>
            <person name="Klenk H.-P."/>
            <person name="Gill S.R."/>
            <person name="Dougherty B.A."/>
            <person name="Nelson K.E."/>
            <person name="Quackenbush J."/>
            <person name="Zhou L."/>
            <person name="Kirkness E.F."/>
            <person name="Peterson S.N."/>
            <person name="Loftus B.J."/>
            <person name="Richardson D.L."/>
            <person name="Dodson R.J."/>
            <person name="Khalak H.G."/>
            <person name="Glodek A."/>
            <person name="McKenney K."/>
            <person name="FitzGerald L.M."/>
            <person name="Lee N."/>
            <person name="Adams M.D."/>
            <person name="Hickey E.K."/>
            <person name="Berg D.E."/>
            <person name="Gocayne J.D."/>
            <person name="Utterback T.R."/>
            <person name="Peterson J.D."/>
            <person name="Kelley J.M."/>
            <person name="Cotton M.D."/>
            <person name="Weidman J.F."/>
            <person name="Fujii C."/>
            <person name="Bowman C."/>
            <person name="Watthey L."/>
            <person name="Wallin E."/>
            <person name="Hayes W.S."/>
            <person name="Borodovsky M."/>
            <person name="Karp P.D."/>
            <person name="Smith H.O."/>
            <person name="Fraser C.M."/>
            <person name="Venter J.C."/>
        </authorList>
    </citation>
    <scope>NUCLEOTIDE SEQUENCE [LARGE SCALE GENOMIC DNA]</scope>
    <source>
        <strain>ATCC 700392 / 26695</strain>
    </source>
</reference>
<organism>
    <name type="scientific">Helicobacter pylori (strain ATCC 700392 / 26695)</name>
    <name type="common">Campylobacter pylori</name>
    <dbReference type="NCBI Taxonomy" id="85962"/>
    <lineage>
        <taxon>Bacteria</taxon>
        <taxon>Pseudomonadati</taxon>
        <taxon>Campylobacterota</taxon>
        <taxon>Epsilonproteobacteria</taxon>
        <taxon>Campylobacterales</taxon>
        <taxon>Helicobacteraceae</taxon>
        <taxon>Helicobacter</taxon>
    </lineage>
</organism>
<comment type="function">
    <text evidence="1">Condensation of UDP-2,3-diacylglucosamine and 2,3-diacylglucosamine-1-phosphate to form lipid A disaccharide, a precursor of lipid A, a phosphorylated glycolipid that anchors the lipopolysaccharide to the outer membrane of the cell.</text>
</comment>
<comment type="catalytic activity">
    <reaction>
        <text>a lipid X + a UDP-2-N,3-O-bis[(3R)-3-hydroxyacyl]-alpha-D-glucosamine = a lipid A disaccharide + UDP + H(+)</text>
        <dbReference type="Rhea" id="RHEA:67828"/>
        <dbReference type="ChEBI" id="CHEBI:15378"/>
        <dbReference type="ChEBI" id="CHEBI:58223"/>
        <dbReference type="ChEBI" id="CHEBI:137748"/>
        <dbReference type="ChEBI" id="CHEBI:176338"/>
        <dbReference type="ChEBI" id="CHEBI:176343"/>
        <dbReference type="EC" id="2.4.1.182"/>
    </reaction>
</comment>
<comment type="pathway">
    <text>Bacterial outer membrane biogenesis; LPS lipid A biosynthesis.</text>
</comment>
<comment type="similarity">
    <text evidence="2">Belongs to the LpxB family.</text>
</comment>
<dbReference type="EC" id="2.4.1.182"/>
<dbReference type="EMBL" id="AE000511">
    <property type="protein sequence ID" value="AAD07909.1"/>
    <property type="molecule type" value="Genomic_DNA"/>
</dbReference>
<dbReference type="PIR" id="C64628">
    <property type="entry name" value="C64628"/>
</dbReference>
<dbReference type="RefSeq" id="NP_207661.1">
    <property type="nucleotide sequence ID" value="NC_000915.1"/>
</dbReference>
<dbReference type="RefSeq" id="WP_001142178.1">
    <property type="nucleotide sequence ID" value="NC_018939.1"/>
</dbReference>
<dbReference type="SMR" id="O25537"/>
<dbReference type="FunCoup" id="O25537">
    <property type="interactions" value="239"/>
</dbReference>
<dbReference type="STRING" id="85962.HP_0867"/>
<dbReference type="CAZy" id="GT19">
    <property type="family name" value="Glycosyltransferase Family 19"/>
</dbReference>
<dbReference type="PaxDb" id="85962-C694_04440"/>
<dbReference type="EnsemblBacteria" id="AAD07909">
    <property type="protein sequence ID" value="AAD07909"/>
    <property type="gene ID" value="HP_0867"/>
</dbReference>
<dbReference type="KEGG" id="heo:C694_04440"/>
<dbReference type="KEGG" id="hpy:HP_0867"/>
<dbReference type="PATRIC" id="fig|85962.47.peg.921"/>
<dbReference type="eggNOG" id="COG0763">
    <property type="taxonomic scope" value="Bacteria"/>
</dbReference>
<dbReference type="InParanoid" id="O25537"/>
<dbReference type="OrthoDB" id="9801642at2"/>
<dbReference type="PhylomeDB" id="O25537"/>
<dbReference type="BioCyc" id="MetaCyc:HP_RS04230-MONOMER"/>
<dbReference type="UniPathway" id="UPA00973"/>
<dbReference type="Proteomes" id="UP000000429">
    <property type="component" value="Chromosome"/>
</dbReference>
<dbReference type="GO" id="GO:0016020">
    <property type="term" value="C:membrane"/>
    <property type="evidence" value="ECO:0007669"/>
    <property type="project" value="GOC"/>
</dbReference>
<dbReference type="GO" id="GO:0008915">
    <property type="term" value="F:lipid-A-disaccharide synthase activity"/>
    <property type="evidence" value="ECO:0007669"/>
    <property type="project" value="UniProtKB-UniRule"/>
</dbReference>
<dbReference type="GO" id="GO:0005543">
    <property type="term" value="F:phospholipid binding"/>
    <property type="evidence" value="ECO:0000318"/>
    <property type="project" value="GO_Central"/>
</dbReference>
<dbReference type="GO" id="GO:0009245">
    <property type="term" value="P:lipid A biosynthetic process"/>
    <property type="evidence" value="ECO:0000318"/>
    <property type="project" value="GO_Central"/>
</dbReference>
<dbReference type="HAMAP" id="MF_00392">
    <property type="entry name" value="LpxB"/>
    <property type="match status" value="1"/>
</dbReference>
<dbReference type="InterPro" id="IPR003835">
    <property type="entry name" value="Glyco_trans_19"/>
</dbReference>
<dbReference type="NCBIfam" id="TIGR00215">
    <property type="entry name" value="lpxB"/>
    <property type="match status" value="1"/>
</dbReference>
<dbReference type="PANTHER" id="PTHR30372">
    <property type="entry name" value="LIPID-A-DISACCHARIDE SYNTHASE"/>
    <property type="match status" value="1"/>
</dbReference>
<dbReference type="PANTHER" id="PTHR30372:SF4">
    <property type="entry name" value="LIPID-A-DISACCHARIDE SYNTHASE, MITOCHONDRIAL-RELATED"/>
    <property type="match status" value="1"/>
</dbReference>
<dbReference type="Pfam" id="PF02684">
    <property type="entry name" value="LpxB"/>
    <property type="match status" value="1"/>
</dbReference>
<dbReference type="SUPFAM" id="SSF53756">
    <property type="entry name" value="UDP-Glycosyltransferase/glycogen phosphorylase"/>
    <property type="match status" value="1"/>
</dbReference>
<proteinExistence type="inferred from homology"/>
<gene>
    <name type="primary">lpxB</name>
    <name type="ordered locus">HP_0867</name>
</gene>
<accession>O25537</accession>
<feature type="chain" id="PRO_0000190169" description="Lipid-A-disaccharide synthase">
    <location>
        <begin position="1"/>
        <end position="360"/>
    </location>
</feature>
<name>LPXB_HELPY</name>